<reference key="1">
    <citation type="submission" date="2006-11" db="EMBL/GenBank/DDBJ databases">
        <title>Sequence of Campylobacter fetus subsp. fetus 82-40.</title>
        <authorList>
            <person name="Fouts D.E."/>
            <person name="Nelson K.E."/>
        </authorList>
    </citation>
    <scope>NUCLEOTIDE SEQUENCE [LARGE SCALE GENOMIC DNA]</scope>
    <source>
        <strain>82-40</strain>
    </source>
</reference>
<protein>
    <recommendedName>
        <fullName evidence="1">Phosphoglucosamine mutase</fullName>
        <ecNumber evidence="1">5.4.2.10</ecNumber>
    </recommendedName>
</protein>
<feature type="chain" id="PRO_0000301296" description="Phosphoglucosamine mutase">
    <location>
        <begin position="1"/>
        <end position="446"/>
    </location>
</feature>
<feature type="active site" description="Phosphoserine intermediate" evidence="1">
    <location>
        <position position="99"/>
    </location>
</feature>
<feature type="binding site" description="via phosphate group" evidence="1">
    <location>
        <position position="99"/>
    </location>
    <ligand>
        <name>Mg(2+)</name>
        <dbReference type="ChEBI" id="CHEBI:18420"/>
    </ligand>
</feature>
<feature type="binding site" evidence="1">
    <location>
        <position position="242"/>
    </location>
    <ligand>
        <name>Mg(2+)</name>
        <dbReference type="ChEBI" id="CHEBI:18420"/>
    </ligand>
</feature>
<feature type="binding site" evidence="1">
    <location>
        <position position="244"/>
    </location>
    <ligand>
        <name>Mg(2+)</name>
        <dbReference type="ChEBI" id="CHEBI:18420"/>
    </ligand>
</feature>
<feature type="binding site" evidence="1">
    <location>
        <position position="246"/>
    </location>
    <ligand>
        <name>Mg(2+)</name>
        <dbReference type="ChEBI" id="CHEBI:18420"/>
    </ligand>
</feature>
<feature type="modified residue" description="Phosphoserine" evidence="1">
    <location>
        <position position="99"/>
    </location>
</feature>
<proteinExistence type="inferred from homology"/>
<sequence>MKLFGTDGVRGRAGEKLNAMTAMRLAMAAGIYFRKNSITNKILVGKDTRKSGYMIETAIVAGLTAVGYNVIQIGPMPTPAIAFLTEDMRCDAGIMISASHNPFDDNGIKFFDSFGNKLSVEAEQAIENIFFHNEIIENNQKIGLEIGQSKRIDDVIGRYIVHIKNSFPKSLTLKGLRVVLDVANGAVYKVAPTVFSELGAETIVLNDEPNGGNINDGCGALHPENLAKEVKRLRADIGFAFDGDADRLVVVDENAKVVDGDALLGVLATYLDENKMLDKKEIVATVMSNAALDDYLAKHKIKLLRSNVGDKFVLEMMKENGINFGGEQSGHIIFSDFSKTGDGLVSALQVSACLLAKNKKASEIFGSIKAYPQKLSNLKIIEKRPLDELKGLKELEDELKKLGIRTLFRYSGTENVIRLLLEGKDEALVTKKIAEVEKFFIKALNE</sequence>
<keyword id="KW-0413">Isomerase</keyword>
<keyword id="KW-0460">Magnesium</keyword>
<keyword id="KW-0479">Metal-binding</keyword>
<keyword id="KW-0597">Phosphoprotein</keyword>
<dbReference type="EC" id="5.4.2.10" evidence="1"/>
<dbReference type="EMBL" id="CP000487">
    <property type="protein sequence ID" value="ABK83123.1"/>
    <property type="molecule type" value="Genomic_DNA"/>
</dbReference>
<dbReference type="RefSeq" id="WP_002850809.1">
    <property type="nucleotide sequence ID" value="NC_008599.1"/>
</dbReference>
<dbReference type="SMR" id="A0RRK2"/>
<dbReference type="GeneID" id="61065529"/>
<dbReference type="KEGG" id="cff:CFF8240_1717"/>
<dbReference type="eggNOG" id="COG1109">
    <property type="taxonomic scope" value="Bacteria"/>
</dbReference>
<dbReference type="HOGENOM" id="CLU_016950_7_0_7"/>
<dbReference type="Proteomes" id="UP000000760">
    <property type="component" value="Chromosome"/>
</dbReference>
<dbReference type="GO" id="GO:0005829">
    <property type="term" value="C:cytosol"/>
    <property type="evidence" value="ECO:0007669"/>
    <property type="project" value="TreeGrafter"/>
</dbReference>
<dbReference type="GO" id="GO:0000287">
    <property type="term" value="F:magnesium ion binding"/>
    <property type="evidence" value="ECO:0007669"/>
    <property type="project" value="UniProtKB-UniRule"/>
</dbReference>
<dbReference type="GO" id="GO:0008966">
    <property type="term" value="F:phosphoglucosamine mutase activity"/>
    <property type="evidence" value="ECO:0007669"/>
    <property type="project" value="UniProtKB-UniRule"/>
</dbReference>
<dbReference type="GO" id="GO:0004615">
    <property type="term" value="F:phosphomannomutase activity"/>
    <property type="evidence" value="ECO:0007669"/>
    <property type="project" value="TreeGrafter"/>
</dbReference>
<dbReference type="GO" id="GO:0005975">
    <property type="term" value="P:carbohydrate metabolic process"/>
    <property type="evidence" value="ECO:0007669"/>
    <property type="project" value="InterPro"/>
</dbReference>
<dbReference type="GO" id="GO:0009252">
    <property type="term" value="P:peptidoglycan biosynthetic process"/>
    <property type="evidence" value="ECO:0007669"/>
    <property type="project" value="TreeGrafter"/>
</dbReference>
<dbReference type="GO" id="GO:0006048">
    <property type="term" value="P:UDP-N-acetylglucosamine biosynthetic process"/>
    <property type="evidence" value="ECO:0007669"/>
    <property type="project" value="TreeGrafter"/>
</dbReference>
<dbReference type="CDD" id="cd05802">
    <property type="entry name" value="GlmM"/>
    <property type="match status" value="1"/>
</dbReference>
<dbReference type="FunFam" id="3.40.120.10:FF:000001">
    <property type="entry name" value="Phosphoglucosamine mutase"/>
    <property type="match status" value="1"/>
</dbReference>
<dbReference type="FunFam" id="3.40.120.10:FF:000003">
    <property type="entry name" value="Phosphoglucosamine mutase"/>
    <property type="match status" value="1"/>
</dbReference>
<dbReference type="Gene3D" id="3.40.120.10">
    <property type="entry name" value="Alpha-D-Glucose-1,6-Bisphosphate, subunit A, domain 3"/>
    <property type="match status" value="3"/>
</dbReference>
<dbReference type="Gene3D" id="3.30.310.50">
    <property type="entry name" value="Alpha-D-phosphohexomutase, C-terminal domain"/>
    <property type="match status" value="1"/>
</dbReference>
<dbReference type="HAMAP" id="MF_01554_B">
    <property type="entry name" value="GlmM_B"/>
    <property type="match status" value="1"/>
</dbReference>
<dbReference type="InterPro" id="IPR005844">
    <property type="entry name" value="A-D-PHexomutase_a/b/a-I"/>
</dbReference>
<dbReference type="InterPro" id="IPR016055">
    <property type="entry name" value="A-D-PHexomutase_a/b/a-I/II/III"/>
</dbReference>
<dbReference type="InterPro" id="IPR005845">
    <property type="entry name" value="A-D-PHexomutase_a/b/a-II"/>
</dbReference>
<dbReference type="InterPro" id="IPR005846">
    <property type="entry name" value="A-D-PHexomutase_a/b/a-III"/>
</dbReference>
<dbReference type="InterPro" id="IPR005843">
    <property type="entry name" value="A-D-PHexomutase_C"/>
</dbReference>
<dbReference type="InterPro" id="IPR036900">
    <property type="entry name" value="A-D-PHexomutase_C_sf"/>
</dbReference>
<dbReference type="InterPro" id="IPR016066">
    <property type="entry name" value="A-D-PHexomutase_CS"/>
</dbReference>
<dbReference type="InterPro" id="IPR005841">
    <property type="entry name" value="Alpha-D-phosphohexomutase_SF"/>
</dbReference>
<dbReference type="InterPro" id="IPR006352">
    <property type="entry name" value="GlmM_bact"/>
</dbReference>
<dbReference type="InterPro" id="IPR050060">
    <property type="entry name" value="Phosphoglucosamine_mutase"/>
</dbReference>
<dbReference type="NCBIfam" id="TIGR01455">
    <property type="entry name" value="glmM"/>
    <property type="match status" value="1"/>
</dbReference>
<dbReference type="PANTHER" id="PTHR42946:SF1">
    <property type="entry name" value="PHOSPHOGLUCOMUTASE (ALPHA-D-GLUCOSE-1,6-BISPHOSPHATE-DEPENDENT)"/>
    <property type="match status" value="1"/>
</dbReference>
<dbReference type="PANTHER" id="PTHR42946">
    <property type="entry name" value="PHOSPHOHEXOSE MUTASE"/>
    <property type="match status" value="1"/>
</dbReference>
<dbReference type="Pfam" id="PF02878">
    <property type="entry name" value="PGM_PMM_I"/>
    <property type="match status" value="1"/>
</dbReference>
<dbReference type="Pfam" id="PF02879">
    <property type="entry name" value="PGM_PMM_II"/>
    <property type="match status" value="1"/>
</dbReference>
<dbReference type="Pfam" id="PF02880">
    <property type="entry name" value="PGM_PMM_III"/>
    <property type="match status" value="1"/>
</dbReference>
<dbReference type="Pfam" id="PF00408">
    <property type="entry name" value="PGM_PMM_IV"/>
    <property type="match status" value="1"/>
</dbReference>
<dbReference type="PRINTS" id="PR00509">
    <property type="entry name" value="PGMPMM"/>
</dbReference>
<dbReference type="SUPFAM" id="SSF55957">
    <property type="entry name" value="Phosphoglucomutase, C-terminal domain"/>
    <property type="match status" value="1"/>
</dbReference>
<dbReference type="SUPFAM" id="SSF53738">
    <property type="entry name" value="Phosphoglucomutase, first 3 domains"/>
    <property type="match status" value="3"/>
</dbReference>
<dbReference type="PROSITE" id="PS00710">
    <property type="entry name" value="PGM_PMM"/>
    <property type="match status" value="1"/>
</dbReference>
<organism>
    <name type="scientific">Campylobacter fetus subsp. fetus (strain 82-40)</name>
    <dbReference type="NCBI Taxonomy" id="360106"/>
    <lineage>
        <taxon>Bacteria</taxon>
        <taxon>Pseudomonadati</taxon>
        <taxon>Campylobacterota</taxon>
        <taxon>Epsilonproteobacteria</taxon>
        <taxon>Campylobacterales</taxon>
        <taxon>Campylobacteraceae</taxon>
        <taxon>Campylobacter</taxon>
    </lineage>
</organism>
<comment type="function">
    <text evidence="1">Catalyzes the conversion of glucosamine-6-phosphate to glucosamine-1-phosphate.</text>
</comment>
<comment type="catalytic activity">
    <reaction evidence="1">
        <text>alpha-D-glucosamine 1-phosphate = D-glucosamine 6-phosphate</text>
        <dbReference type="Rhea" id="RHEA:23424"/>
        <dbReference type="ChEBI" id="CHEBI:58516"/>
        <dbReference type="ChEBI" id="CHEBI:58725"/>
        <dbReference type="EC" id="5.4.2.10"/>
    </reaction>
</comment>
<comment type="cofactor">
    <cofactor evidence="1">
        <name>Mg(2+)</name>
        <dbReference type="ChEBI" id="CHEBI:18420"/>
    </cofactor>
    <text evidence="1">Binds 1 Mg(2+) ion per subunit.</text>
</comment>
<comment type="PTM">
    <text evidence="1">Activated by phosphorylation.</text>
</comment>
<comment type="similarity">
    <text evidence="1">Belongs to the phosphohexose mutase family.</text>
</comment>
<name>GLMM_CAMFF</name>
<evidence type="ECO:0000255" key="1">
    <source>
        <dbReference type="HAMAP-Rule" id="MF_01554"/>
    </source>
</evidence>
<gene>
    <name evidence="1" type="primary">glmM</name>
    <name type="ordered locus">CFF8240_1717</name>
</gene>
<accession>A0RRK2</accession>